<proteinExistence type="inferred from homology"/>
<sequence>MEIEKTNRMNALFEFYAALLTDKQMNYIELYYADDYSLAEIAEEFGVSRQAVYDNIKRTEKILEDYEMKLHMYSDYIVRSQILEEIAEKYPKDSFLQEQIATLSSIDNRD</sequence>
<protein>
    <recommendedName>
        <fullName evidence="1">UPF0122 protein SGO_1122</fullName>
    </recommendedName>
</protein>
<evidence type="ECO:0000255" key="1">
    <source>
        <dbReference type="HAMAP-Rule" id="MF_00245"/>
    </source>
</evidence>
<organism>
    <name type="scientific">Streptococcus gordonii (strain Challis / ATCC 35105 / BCRC 15272 / CH1 / DL1 / V288)</name>
    <dbReference type="NCBI Taxonomy" id="467705"/>
    <lineage>
        <taxon>Bacteria</taxon>
        <taxon>Bacillati</taxon>
        <taxon>Bacillota</taxon>
        <taxon>Bacilli</taxon>
        <taxon>Lactobacillales</taxon>
        <taxon>Streptococcaceae</taxon>
        <taxon>Streptococcus</taxon>
    </lineage>
</organism>
<accession>A8AXA1</accession>
<dbReference type="EMBL" id="CP000725">
    <property type="protein sequence ID" value="ABV10424.1"/>
    <property type="molecule type" value="Genomic_DNA"/>
</dbReference>
<dbReference type="RefSeq" id="WP_012000533.1">
    <property type="nucleotide sequence ID" value="NC_009785.1"/>
</dbReference>
<dbReference type="SMR" id="A8AXA1"/>
<dbReference type="STRING" id="467705.SGO_1122"/>
<dbReference type="KEGG" id="sgo:SGO_1122"/>
<dbReference type="eggNOG" id="COG2739">
    <property type="taxonomic scope" value="Bacteria"/>
</dbReference>
<dbReference type="HOGENOM" id="CLU_129218_1_0_9"/>
<dbReference type="Proteomes" id="UP000001131">
    <property type="component" value="Chromosome"/>
</dbReference>
<dbReference type="Gene3D" id="1.10.10.10">
    <property type="entry name" value="Winged helix-like DNA-binding domain superfamily/Winged helix DNA-binding domain"/>
    <property type="match status" value="1"/>
</dbReference>
<dbReference type="HAMAP" id="MF_00245">
    <property type="entry name" value="UPF0122"/>
    <property type="match status" value="1"/>
</dbReference>
<dbReference type="InterPro" id="IPR013324">
    <property type="entry name" value="RNA_pol_sigma_r3/r4-like"/>
</dbReference>
<dbReference type="InterPro" id="IPR007394">
    <property type="entry name" value="UPF0122"/>
</dbReference>
<dbReference type="InterPro" id="IPR054831">
    <property type="entry name" value="UPF0122_fam_protein"/>
</dbReference>
<dbReference type="InterPro" id="IPR036388">
    <property type="entry name" value="WH-like_DNA-bd_sf"/>
</dbReference>
<dbReference type="NCBIfam" id="NF001066">
    <property type="entry name" value="PRK00118.1-1"/>
    <property type="match status" value="1"/>
</dbReference>
<dbReference type="NCBIfam" id="NF001068">
    <property type="entry name" value="PRK00118.1-4"/>
    <property type="match status" value="1"/>
</dbReference>
<dbReference type="NCBIfam" id="NF001070">
    <property type="entry name" value="PRK00118.1-6"/>
    <property type="match status" value="1"/>
</dbReference>
<dbReference type="NCBIfam" id="NF045758">
    <property type="entry name" value="YlxM"/>
    <property type="match status" value="1"/>
</dbReference>
<dbReference type="PANTHER" id="PTHR40083">
    <property type="entry name" value="UPF0122 PROTEIN CBO2450/CLC_2298"/>
    <property type="match status" value="1"/>
</dbReference>
<dbReference type="PANTHER" id="PTHR40083:SF1">
    <property type="entry name" value="UPF0122 PROTEIN YLXM"/>
    <property type="match status" value="1"/>
</dbReference>
<dbReference type="Pfam" id="PF04297">
    <property type="entry name" value="UPF0122"/>
    <property type="match status" value="1"/>
</dbReference>
<dbReference type="SUPFAM" id="SSF88659">
    <property type="entry name" value="Sigma3 and sigma4 domains of RNA polymerase sigma factors"/>
    <property type="match status" value="1"/>
</dbReference>
<feature type="chain" id="PRO_1000078404" description="UPF0122 protein SGO_1122">
    <location>
        <begin position="1"/>
        <end position="110"/>
    </location>
</feature>
<reference key="1">
    <citation type="journal article" date="2007" name="J. Bacteriol.">
        <title>Genome-wide transcriptional changes in Streptococcus gordonii in response to competence signaling peptide.</title>
        <authorList>
            <person name="Vickerman M.M."/>
            <person name="Iobst S."/>
            <person name="Jesionowski A.M."/>
            <person name="Gill S.R."/>
        </authorList>
    </citation>
    <scope>NUCLEOTIDE SEQUENCE [LARGE SCALE GENOMIC DNA]</scope>
    <source>
        <strain>Challis / ATCC 35105 / BCRC 15272 / CH1 / DL1 / V288</strain>
    </source>
</reference>
<comment type="function">
    <text evidence="1">Might take part in the signal recognition particle (SRP) pathway. This is inferred from the conservation of its genetic proximity to ftsY/ffh. May be a regulatory protein.</text>
</comment>
<comment type="similarity">
    <text evidence="1">Belongs to the UPF0122 family.</text>
</comment>
<name>Y1122_STRGC</name>
<keyword id="KW-1185">Reference proteome</keyword>
<gene>
    <name type="ordered locus">SGO_1122</name>
</gene>